<feature type="initiator methionine" description="Removed" evidence="2">
    <location>
        <position position="1"/>
    </location>
</feature>
<feature type="chain" id="PRO_0000062022" description="Photosystem I iron-sulfur center">
    <location>
        <begin position="2"/>
        <end position="81"/>
    </location>
</feature>
<feature type="domain" description="4Fe-4S ferredoxin-type 1">
    <location>
        <begin position="2"/>
        <end position="31"/>
    </location>
</feature>
<feature type="domain" description="4Fe-4S ferredoxin-type 2">
    <location>
        <begin position="39"/>
        <end position="68"/>
    </location>
</feature>
<feature type="binding site" evidence="1">
    <location>
        <position position="11"/>
    </location>
    <ligand>
        <name>[4Fe-4S] cluster</name>
        <dbReference type="ChEBI" id="CHEBI:49883"/>
        <label>1</label>
    </ligand>
</feature>
<feature type="binding site" evidence="1">
    <location>
        <position position="14"/>
    </location>
    <ligand>
        <name>[4Fe-4S] cluster</name>
        <dbReference type="ChEBI" id="CHEBI:49883"/>
        <label>1</label>
    </ligand>
</feature>
<feature type="binding site" evidence="1">
    <location>
        <position position="17"/>
    </location>
    <ligand>
        <name>[4Fe-4S] cluster</name>
        <dbReference type="ChEBI" id="CHEBI:49883"/>
        <label>1</label>
    </ligand>
</feature>
<feature type="binding site" evidence="1">
    <location>
        <position position="21"/>
    </location>
    <ligand>
        <name>[4Fe-4S] cluster</name>
        <dbReference type="ChEBI" id="CHEBI:49883"/>
        <label>2</label>
    </ligand>
</feature>
<feature type="binding site" evidence="1">
    <location>
        <position position="48"/>
    </location>
    <ligand>
        <name>[4Fe-4S] cluster</name>
        <dbReference type="ChEBI" id="CHEBI:49883"/>
        <label>2</label>
    </ligand>
</feature>
<feature type="binding site" evidence="1">
    <location>
        <position position="51"/>
    </location>
    <ligand>
        <name>[4Fe-4S] cluster</name>
        <dbReference type="ChEBI" id="CHEBI:49883"/>
        <label>2</label>
    </ligand>
</feature>
<feature type="binding site" evidence="1">
    <location>
        <position position="54"/>
    </location>
    <ligand>
        <name>[4Fe-4S] cluster</name>
        <dbReference type="ChEBI" id="CHEBI:49883"/>
        <label>2</label>
    </ligand>
</feature>
<feature type="binding site" evidence="1">
    <location>
        <position position="58"/>
    </location>
    <ligand>
        <name>[4Fe-4S] cluster</name>
        <dbReference type="ChEBI" id="CHEBI:49883"/>
        <label>1</label>
    </ligand>
</feature>
<feature type="mutagenesis site" description="Decreases assembly onto PSI cores (in vitro)." evidence="4">
    <original>D</original>
    <variation>A</variation>
    <location>
        <position position="9"/>
    </location>
</feature>
<feature type="mutagenesis site" description="Decreases assembly onto PSI cores in vitro, FA and FB seems to assemble normally." evidence="4">
    <original>D</original>
    <variation>R</variation>
    <location>
        <position position="9"/>
    </location>
</feature>
<feature type="mutagenesis site" description="No effect." evidence="4">
    <original>E</original>
    <variation>A</variation>
    <location>
        <position position="27"/>
    </location>
</feature>
<feature type="mutagenesis site" description="Decreases assembly onto PSI cores in vitro, FA and FB seem to assemble normally." evidence="4">
    <original>E</original>
    <variation>R</variation>
    <location>
        <position position="27"/>
    </location>
</feature>
<feature type="mutagenesis site" description="No effect." evidence="4">
    <original>D</original>
    <variation>A</variation>
    <location>
        <position position="32"/>
    </location>
</feature>
<feature type="mutagenesis site" description="Decreases assembly onto PSI cores in vitro, FA and FB seems to assemble normally." evidence="4">
    <original>D</original>
    <variation>R</variation>
    <location>
        <position position="32"/>
    </location>
</feature>
<feature type="mutagenesis site" description="Required for stable assembly of the protein onto PSI cores (in vitro)." evidence="3">
    <location>
        <begin position="72"/>
        <end position="81"/>
    </location>
</feature>
<proteinExistence type="evidence at protein level"/>
<gene>
    <name type="primary">psaC</name>
    <name type="ordered locus">syc0986_d</name>
</gene>
<reference key="1">
    <citation type="journal article" date="1994" name="Plant Physiol.">
        <title>Sequence of a psaC gene from the cyanobacterium Synechococcus sp. PCC 6301.</title>
        <authorList>
            <person name="Herman P.L."/>
            <person name="Adiwilaga K."/>
            <person name="Golbeck J.H."/>
            <person name="Weeks D.P."/>
        </authorList>
    </citation>
    <scope>NUCLEOTIDE SEQUENCE [GENOMIC DNA]</scope>
</reference>
<reference key="2">
    <citation type="journal article" date="2007" name="Photosyn. Res.">
        <title>Complete nucleotide sequence of the freshwater unicellular cyanobacterium Synechococcus elongatus PCC 6301 chromosome: gene content and organization.</title>
        <authorList>
            <person name="Sugita C."/>
            <person name="Ogata K."/>
            <person name="Shikata M."/>
            <person name="Jikuya H."/>
            <person name="Takano J."/>
            <person name="Furumichi M."/>
            <person name="Kanehisa M."/>
            <person name="Omata T."/>
            <person name="Sugiura M."/>
            <person name="Sugita M."/>
        </authorList>
    </citation>
    <scope>NUCLEOTIDE SEQUENCE [LARGE SCALE GENOMIC DNA]</scope>
    <source>
        <strain>ATCC 27144 / PCC 6301 / SAUG 1402/1</strain>
    </source>
</reference>
<reference key="3">
    <citation type="journal article" date="1991" name="Biochim. Biophys. Acta">
        <title>Polypeptide composition of the Photosystem I complex and the Photosystem I core protein from Synechococcus sp. PCC 6301.</title>
        <authorList>
            <person name="Li N."/>
            <person name="Warren P.V."/>
            <person name="Golbeck J.H."/>
            <person name="Frank G."/>
            <person name="Zuber H."/>
            <person name="Bryant D.A."/>
        </authorList>
    </citation>
    <scope>PROTEIN SEQUENCE OF 2-19</scope>
</reference>
<reference key="4">
    <citation type="journal article" date="1996" name="Biochemistry">
        <title>Site-directed mutagenesis of the subunit PsaC establishes a surface-exposed domain interacting with the photosystem I core binding site.</title>
        <authorList>
            <person name="Rodday S.M."/>
            <person name="Do L.T."/>
            <person name="Chynwat V."/>
            <person name="Frank H.A."/>
            <person name="Biggins J."/>
        </authorList>
    </citation>
    <scope>MUTAGENESIS OF ASP-9; GLU-27 AND ASP-32</scope>
</reference>
<reference key="5">
    <citation type="journal article" date="1998" name="Biophys. J.">
        <title>PsaC subunit of photosystem I is oriented with iron-sulfur cluster F(B) as the immediate electron donor to ferredoxin and flavodoxin.</title>
        <authorList>
            <person name="Vassiliev I.R."/>
            <person name="Jung Y.-S."/>
            <person name="Yang F."/>
            <person name="Golbeck J.H."/>
        </authorList>
    </citation>
    <scope>FUNCTION</scope>
</reference>
<reference key="6">
    <citation type="journal article" date="1996" name="J. Biol. Chem.">
        <title>Reconstitution of barley photosystem I with modified PSI-C allows identification of domains interacting with PSI-D and PSI-A/B.</title>
        <authorList>
            <person name="Naver H."/>
            <person name="Scott M.P."/>
            <person name="Golbeck J.H."/>
            <person name="Moeller B.L."/>
            <person name="Scheller H.V."/>
        </authorList>
    </citation>
    <scope>MUTAGENESIS OF THE C-TERMINUS</scope>
</reference>
<comment type="function">
    <text evidence="5">Apoprotein for the two 4Fe-4S centers FA and FB of photosystem I (PSI); essential for photochemical activity. FB is the terminal electron acceptor of PSI, donating electrons to ferredoxin. The C-terminus interacts with PsaA/B/D and helps assemble the protein into the PSI complex. Required for binding of PsaD and PsaE to PSI. PSI is a plastocyanin/cytochrome c6-ferredoxin oxidoreductase, converting photonic excitation into a charge separation, which transfers an electron from the donor P700 chlorophyll pair to the spectroscopically characterized acceptors A0, A1, FX, FA and FB in turn.</text>
</comment>
<comment type="catalytic activity">
    <reaction>
        <text>reduced [plastocyanin] + hnu + oxidized [2Fe-2S]-[ferredoxin] = oxidized [plastocyanin] + reduced [2Fe-2S]-[ferredoxin]</text>
        <dbReference type="Rhea" id="RHEA:30407"/>
        <dbReference type="Rhea" id="RHEA-COMP:10000"/>
        <dbReference type="Rhea" id="RHEA-COMP:10001"/>
        <dbReference type="Rhea" id="RHEA-COMP:10039"/>
        <dbReference type="Rhea" id="RHEA-COMP:10040"/>
        <dbReference type="ChEBI" id="CHEBI:29036"/>
        <dbReference type="ChEBI" id="CHEBI:30212"/>
        <dbReference type="ChEBI" id="CHEBI:33737"/>
        <dbReference type="ChEBI" id="CHEBI:33738"/>
        <dbReference type="ChEBI" id="CHEBI:49552"/>
        <dbReference type="EC" id="1.97.1.12"/>
    </reaction>
</comment>
<comment type="cofactor">
    <cofactor>
        <name>[4Fe-4S] cluster</name>
        <dbReference type="ChEBI" id="CHEBI:49883"/>
    </cofactor>
    <text>Binds 2 [4Fe-4S] clusters. Cluster 2 is most probably the spectroscopically characterized electron acceptor FA and cluster 1 is most probably FB.</text>
</comment>
<comment type="subunit">
    <text>The cyanobacterial PSI reaction center is composed of one copy each of PsaA,B,C,D,E,F,I,J,K,L,M and X, and forms trimeric complexes.</text>
</comment>
<comment type="subcellular location">
    <subcellularLocation>
        <location>Cellular thylakoid membrane</location>
        <topology>Peripheral membrane protein</topology>
        <orientation>Cytoplasmic side</orientation>
    </subcellularLocation>
</comment>
<dbReference type="EC" id="1.97.1.12"/>
<dbReference type="EMBL" id="U01536">
    <property type="protein sequence ID" value="AAA18220.1"/>
    <property type="molecule type" value="Unassigned_DNA"/>
</dbReference>
<dbReference type="EMBL" id="AP008231">
    <property type="protein sequence ID" value="BAD79176.1"/>
    <property type="molecule type" value="Genomic_DNA"/>
</dbReference>
<dbReference type="RefSeq" id="WP_011243298.1">
    <property type="nucleotide sequence ID" value="NZ_CP085785.1"/>
</dbReference>
<dbReference type="SMR" id="P31085"/>
<dbReference type="GeneID" id="72429358"/>
<dbReference type="KEGG" id="syc:syc0986_d"/>
<dbReference type="eggNOG" id="COG1143">
    <property type="taxonomic scope" value="Bacteria"/>
</dbReference>
<dbReference type="Proteomes" id="UP000001175">
    <property type="component" value="Chromosome"/>
</dbReference>
<dbReference type="GO" id="GO:0009522">
    <property type="term" value="C:photosystem I"/>
    <property type="evidence" value="ECO:0007669"/>
    <property type="project" value="UniProtKB-KW"/>
</dbReference>
<dbReference type="GO" id="GO:0031676">
    <property type="term" value="C:plasma membrane-derived thylakoid membrane"/>
    <property type="evidence" value="ECO:0007669"/>
    <property type="project" value="UniProtKB-SubCell"/>
</dbReference>
<dbReference type="GO" id="GO:0051539">
    <property type="term" value="F:4 iron, 4 sulfur cluster binding"/>
    <property type="evidence" value="ECO:0007669"/>
    <property type="project" value="UniProtKB-KW"/>
</dbReference>
<dbReference type="GO" id="GO:0009055">
    <property type="term" value="F:electron transfer activity"/>
    <property type="evidence" value="ECO:0007669"/>
    <property type="project" value="UniProtKB-UniRule"/>
</dbReference>
<dbReference type="GO" id="GO:0046872">
    <property type="term" value="F:metal ion binding"/>
    <property type="evidence" value="ECO:0007669"/>
    <property type="project" value="UniProtKB-KW"/>
</dbReference>
<dbReference type="GO" id="GO:0016491">
    <property type="term" value="F:oxidoreductase activity"/>
    <property type="evidence" value="ECO:0007669"/>
    <property type="project" value="UniProtKB-KW"/>
</dbReference>
<dbReference type="GO" id="GO:0009773">
    <property type="term" value="P:photosynthetic electron transport in photosystem I"/>
    <property type="evidence" value="ECO:0007669"/>
    <property type="project" value="InterPro"/>
</dbReference>
<dbReference type="FunFam" id="3.30.70.20:FF:000001">
    <property type="entry name" value="Photosystem I iron-sulfur center"/>
    <property type="match status" value="1"/>
</dbReference>
<dbReference type="Gene3D" id="3.30.70.20">
    <property type="match status" value="1"/>
</dbReference>
<dbReference type="HAMAP" id="MF_01303">
    <property type="entry name" value="PSI_PsaC"/>
    <property type="match status" value="1"/>
</dbReference>
<dbReference type="InterPro" id="IPR017896">
    <property type="entry name" value="4Fe4S_Fe-S-bd"/>
</dbReference>
<dbReference type="InterPro" id="IPR017900">
    <property type="entry name" value="4Fe4S_Fe_S_CS"/>
</dbReference>
<dbReference type="InterPro" id="IPR050157">
    <property type="entry name" value="PSI_iron-sulfur_center"/>
</dbReference>
<dbReference type="InterPro" id="IPR017491">
    <property type="entry name" value="PSI_PsaC"/>
</dbReference>
<dbReference type="NCBIfam" id="TIGR03048">
    <property type="entry name" value="PS_I_psaC"/>
    <property type="match status" value="1"/>
</dbReference>
<dbReference type="PANTHER" id="PTHR24960:SF79">
    <property type="entry name" value="PHOTOSYSTEM I IRON-SULFUR CENTER"/>
    <property type="match status" value="1"/>
</dbReference>
<dbReference type="PANTHER" id="PTHR24960">
    <property type="entry name" value="PHOTOSYSTEM I IRON-SULFUR CENTER-RELATED"/>
    <property type="match status" value="1"/>
</dbReference>
<dbReference type="Pfam" id="PF12838">
    <property type="entry name" value="Fer4_7"/>
    <property type="match status" value="1"/>
</dbReference>
<dbReference type="SUPFAM" id="SSF54862">
    <property type="entry name" value="4Fe-4S ferredoxins"/>
    <property type="match status" value="1"/>
</dbReference>
<dbReference type="PROSITE" id="PS00198">
    <property type="entry name" value="4FE4S_FER_1"/>
    <property type="match status" value="2"/>
</dbReference>
<dbReference type="PROSITE" id="PS51379">
    <property type="entry name" value="4FE4S_FER_2"/>
    <property type="match status" value="2"/>
</dbReference>
<name>PSAC_SYNP6</name>
<organism>
    <name type="scientific">Synechococcus sp. (strain ATCC 27144 / PCC 6301 / SAUG 1402/1)</name>
    <name type="common">Anacystis nidulans</name>
    <dbReference type="NCBI Taxonomy" id="269084"/>
    <lineage>
        <taxon>Bacteria</taxon>
        <taxon>Bacillati</taxon>
        <taxon>Cyanobacteriota</taxon>
        <taxon>Cyanophyceae</taxon>
        <taxon>Synechococcales</taxon>
        <taxon>Synechococcaceae</taxon>
        <taxon>Synechococcus</taxon>
    </lineage>
</organism>
<accession>P31085</accession>
<sequence length="81" mass="8798">MSHSVKIYDTCIGCTQCVRACPLDVLEMVPWDGCKAGQIAASPRTEDCVGCKRCETACPTDFLSIRVYLGAETTRSMGLAY</sequence>
<protein>
    <recommendedName>
        <fullName>Photosystem I iron-sulfur center</fullName>
        <ecNumber>1.97.1.12</ecNumber>
    </recommendedName>
    <alternativeName>
        <fullName>9 kDa polypeptide</fullName>
    </alternativeName>
    <alternativeName>
        <fullName>PSI-C</fullName>
    </alternativeName>
    <alternativeName>
        <fullName>Photosystem I subunit VII</fullName>
    </alternativeName>
    <alternativeName>
        <fullName>PsaC</fullName>
    </alternativeName>
</protein>
<evidence type="ECO:0000250" key="1"/>
<evidence type="ECO:0000269" key="2">
    <source>
    </source>
</evidence>
<evidence type="ECO:0000269" key="3">
    <source>
    </source>
</evidence>
<evidence type="ECO:0000269" key="4">
    <source>
    </source>
</evidence>
<evidence type="ECO:0000269" key="5">
    <source>
    </source>
</evidence>
<keyword id="KW-0004">4Fe-4S</keyword>
<keyword id="KW-0903">Direct protein sequencing</keyword>
<keyword id="KW-0249">Electron transport</keyword>
<keyword id="KW-0408">Iron</keyword>
<keyword id="KW-0411">Iron-sulfur</keyword>
<keyword id="KW-0472">Membrane</keyword>
<keyword id="KW-0479">Metal-binding</keyword>
<keyword id="KW-0560">Oxidoreductase</keyword>
<keyword id="KW-0602">Photosynthesis</keyword>
<keyword id="KW-0603">Photosystem I</keyword>
<keyword id="KW-0677">Repeat</keyword>
<keyword id="KW-0793">Thylakoid</keyword>
<keyword id="KW-0813">Transport</keyword>